<reference key="1">
    <citation type="submission" date="2007-06" db="EMBL/GenBank/DDBJ databases">
        <title>Complete sequence of chromosome of Staphylococcus aureus subsp. aureus JH1.</title>
        <authorList>
            <consortium name="US DOE Joint Genome Institute"/>
            <person name="Copeland A."/>
            <person name="Lucas S."/>
            <person name="Lapidus A."/>
            <person name="Barry K."/>
            <person name="Detter J.C."/>
            <person name="Glavina del Rio T."/>
            <person name="Hammon N."/>
            <person name="Israni S."/>
            <person name="Dalin E."/>
            <person name="Tice H."/>
            <person name="Pitluck S."/>
            <person name="Chain P."/>
            <person name="Malfatti S."/>
            <person name="Shin M."/>
            <person name="Vergez L."/>
            <person name="Schmutz J."/>
            <person name="Larimer F."/>
            <person name="Land M."/>
            <person name="Hauser L."/>
            <person name="Kyrpides N."/>
            <person name="Ivanova N."/>
            <person name="Tomasz A."/>
            <person name="Richardson P."/>
        </authorList>
    </citation>
    <scope>NUCLEOTIDE SEQUENCE [LARGE SCALE GENOMIC DNA]</scope>
    <source>
        <strain>JH1</strain>
    </source>
</reference>
<dbReference type="EC" id="7.2.2.8"/>
<dbReference type="EMBL" id="CP000736">
    <property type="protein sequence ID" value="ABR53456.1"/>
    <property type="molecule type" value="Genomic_DNA"/>
</dbReference>
<dbReference type="SMR" id="A6U4T8"/>
<dbReference type="KEGG" id="sah:SaurJH1_2633"/>
<dbReference type="HOGENOM" id="CLU_001771_0_3_9"/>
<dbReference type="GO" id="GO:0005886">
    <property type="term" value="C:plasma membrane"/>
    <property type="evidence" value="ECO:0007669"/>
    <property type="project" value="UniProtKB-SubCell"/>
</dbReference>
<dbReference type="GO" id="GO:0005524">
    <property type="term" value="F:ATP binding"/>
    <property type="evidence" value="ECO:0007669"/>
    <property type="project" value="UniProtKB-KW"/>
</dbReference>
<dbReference type="GO" id="GO:0016887">
    <property type="term" value="F:ATP hydrolysis activity"/>
    <property type="evidence" value="ECO:0007669"/>
    <property type="project" value="InterPro"/>
</dbReference>
<dbReference type="GO" id="GO:0005507">
    <property type="term" value="F:copper ion binding"/>
    <property type="evidence" value="ECO:0007669"/>
    <property type="project" value="InterPro"/>
</dbReference>
<dbReference type="GO" id="GO:0043682">
    <property type="term" value="F:P-type divalent copper transporter activity"/>
    <property type="evidence" value="ECO:0007669"/>
    <property type="project" value="TreeGrafter"/>
</dbReference>
<dbReference type="GO" id="GO:0140581">
    <property type="term" value="F:P-type monovalent copper transporter activity"/>
    <property type="evidence" value="ECO:0007669"/>
    <property type="project" value="UniProtKB-EC"/>
</dbReference>
<dbReference type="GO" id="GO:0055070">
    <property type="term" value="P:copper ion homeostasis"/>
    <property type="evidence" value="ECO:0007669"/>
    <property type="project" value="TreeGrafter"/>
</dbReference>
<dbReference type="CDD" id="cd00371">
    <property type="entry name" value="HMA"/>
    <property type="match status" value="2"/>
</dbReference>
<dbReference type="CDD" id="cd02094">
    <property type="entry name" value="P-type_ATPase_Cu-like"/>
    <property type="match status" value="1"/>
</dbReference>
<dbReference type="FunFam" id="3.40.1110.10:FF:000038">
    <property type="entry name" value="Copper-exporting P-type ATPase"/>
    <property type="match status" value="1"/>
</dbReference>
<dbReference type="FunFam" id="3.40.1110.10:FF:000049">
    <property type="entry name" value="Copper-exporting P-type ATPase"/>
    <property type="match status" value="1"/>
</dbReference>
<dbReference type="FunFam" id="2.70.150.10:FF:000020">
    <property type="entry name" value="Copper-exporting P-type ATPase A"/>
    <property type="match status" value="1"/>
</dbReference>
<dbReference type="FunFam" id="3.30.70.100:FF:000005">
    <property type="entry name" value="Copper-exporting P-type ATPase A"/>
    <property type="match status" value="2"/>
</dbReference>
<dbReference type="FunFam" id="3.40.50.1000:FF:000144">
    <property type="entry name" value="copper-transporting ATPase 1 isoform X2"/>
    <property type="match status" value="1"/>
</dbReference>
<dbReference type="Gene3D" id="3.30.70.100">
    <property type="match status" value="2"/>
</dbReference>
<dbReference type="Gene3D" id="3.40.1110.10">
    <property type="entry name" value="Calcium-transporting ATPase, cytoplasmic domain N"/>
    <property type="match status" value="2"/>
</dbReference>
<dbReference type="Gene3D" id="2.70.150.10">
    <property type="entry name" value="Calcium-transporting ATPase, cytoplasmic transduction domain A"/>
    <property type="match status" value="1"/>
</dbReference>
<dbReference type="Gene3D" id="3.40.50.1000">
    <property type="entry name" value="HAD superfamily/HAD-like"/>
    <property type="match status" value="1"/>
</dbReference>
<dbReference type="InterPro" id="IPR023299">
    <property type="entry name" value="ATPase_P-typ_cyto_dom_N"/>
</dbReference>
<dbReference type="InterPro" id="IPR018303">
    <property type="entry name" value="ATPase_P-typ_P_site"/>
</dbReference>
<dbReference type="InterPro" id="IPR023298">
    <property type="entry name" value="ATPase_P-typ_TM_dom_sf"/>
</dbReference>
<dbReference type="InterPro" id="IPR008250">
    <property type="entry name" value="ATPase_P-typ_transduc_dom_A_sf"/>
</dbReference>
<dbReference type="InterPro" id="IPR036412">
    <property type="entry name" value="HAD-like_sf"/>
</dbReference>
<dbReference type="InterPro" id="IPR023214">
    <property type="entry name" value="HAD_sf"/>
</dbReference>
<dbReference type="InterPro" id="IPR017969">
    <property type="entry name" value="Heavy-metal-associated_CS"/>
</dbReference>
<dbReference type="InterPro" id="IPR006122">
    <property type="entry name" value="HMA_Cu_ion-bd"/>
</dbReference>
<dbReference type="InterPro" id="IPR006121">
    <property type="entry name" value="HMA_dom"/>
</dbReference>
<dbReference type="InterPro" id="IPR036163">
    <property type="entry name" value="HMA_dom_sf"/>
</dbReference>
<dbReference type="InterPro" id="IPR027256">
    <property type="entry name" value="P-typ_ATPase_IB"/>
</dbReference>
<dbReference type="InterPro" id="IPR001757">
    <property type="entry name" value="P_typ_ATPase"/>
</dbReference>
<dbReference type="InterPro" id="IPR044492">
    <property type="entry name" value="P_typ_ATPase_HD_dom"/>
</dbReference>
<dbReference type="NCBIfam" id="TIGR01511">
    <property type="entry name" value="ATPase-IB1_Cu"/>
    <property type="match status" value="1"/>
</dbReference>
<dbReference type="NCBIfam" id="TIGR01525">
    <property type="entry name" value="ATPase-IB_hvy"/>
    <property type="match status" value="1"/>
</dbReference>
<dbReference type="NCBIfam" id="TIGR01494">
    <property type="entry name" value="ATPase_P-type"/>
    <property type="match status" value="1"/>
</dbReference>
<dbReference type="NCBIfam" id="TIGR00003">
    <property type="entry name" value="copper ion binding protein"/>
    <property type="match status" value="2"/>
</dbReference>
<dbReference type="PANTHER" id="PTHR43520">
    <property type="entry name" value="ATP7, ISOFORM B"/>
    <property type="match status" value="1"/>
</dbReference>
<dbReference type="PANTHER" id="PTHR43520:SF8">
    <property type="entry name" value="P-TYPE CU(+) TRANSPORTER"/>
    <property type="match status" value="1"/>
</dbReference>
<dbReference type="Pfam" id="PF00122">
    <property type="entry name" value="E1-E2_ATPase"/>
    <property type="match status" value="1"/>
</dbReference>
<dbReference type="Pfam" id="PF00403">
    <property type="entry name" value="HMA"/>
    <property type="match status" value="2"/>
</dbReference>
<dbReference type="Pfam" id="PF00702">
    <property type="entry name" value="Hydrolase"/>
    <property type="match status" value="1"/>
</dbReference>
<dbReference type="PRINTS" id="PR00119">
    <property type="entry name" value="CATATPASE"/>
</dbReference>
<dbReference type="PRINTS" id="PR00943">
    <property type="entry name" value="CUATPASE"/>
</dbReference>
<dbReference type="SFLD" id="SFLDS00003">
    <property type="entry name" value="Haloacid_Dehalogenase"/>
    <property type="match status" value="1"/>
</dbReference>
<dbReference type="SFLD" id="SFLDF00027">
    <property type="entry name" value="p-type_atpase"/>
    <property type="match status" value="1"/>
</dbReference>
<dbReference type="SUPFAM" id="SSF81653">
    <property type="entry name" value="Calcium ATPase, transduction domain A"/>
    <property type="match status" value="1"/>
</dbReference>
<dbReference type="SUPFAM" id="SSF81665">
    <property type="entry name" value="Calcium ATPase, transmembrane domain M"/>
    <property type="match status" value="1"/>
</dbReference>
<dbReference type="SUPFAM" id="SSF56784">
    <property type="entry name" value="HAD-like"/>
    <property type="match status" value="1"/>
</dbReference>
<dbReference type="SUPFAM" id="SSF55008">
    <property type="entry name" value="HMA, heavy metal-associated domain"/>
    <property type="match status" value="2"/>
</dbReference>
<dbReference type="PROSITE" id="PS00154">
    <property type="entry name" value="ATPASE_E1_E2"/>
    <property type="match status" value="1"/>
</dbReference>
<dbReference type="PROSITE" id="PS01047">
    <property type="entry name" value="HMA_1"/>
    <property type="match status" value="2"/>
</dbReference>
<dbReference type="PROSITE" id="PS50846">
    <property type="entry name" value="HMA_2"/>
    <property type="match status" value="2"/>
</dbReference>
<keyword id="KW-0067">ATP-binding</keyword>
<keyword id="KW-1003">Cell membrane</keyword>
<keyword id="KW-0186">Copper</keyword>
<keyword id="KW-0187">Copper transport</keyword>
<keyword id="KW-0406">Ion transport</keyword>
<keyword id="KW-0460">Magnesium</keyword>
<keyword id="KW-0472">Membrane</keyword>
<keyword id="KW-0479">Metal-binding</keyword>
<keyword id="KW-0547">Nucleotide-binding</keyword>
<keyword id="KW-0597">Phosphoprotein</keyword>
<keyword id="KW-0677">Repeat</keyword>
<keyword id="KW-1278">Translocase</keyword>
<keyword id="KW-0812">Transmembrane</keyword>
<keyword id="KW-1133">Transmembrane helix</keyword>
<keyword id="KW-0813">Transport</keyword>
<accession>A6U4T8</accession>
<comment type="function">
    <text evidence="1">Involved in copper export.</text>
</comment>
<comment type="catalytic activity">
    <reaction>
        <text>Cu(+)(in) + ATP + H2O = Cu(+)(out) + ADP + phosphate + H(+)</text>
        <dbReference type="Rhea" id="RHEA:25792"/>
        <dbReference type="ChEBI" id="CHEBI:15377"/>
        <dbReference type="ChEBI" id="CHEBI:15378"/>
        <dbReference type="ChEBI" id="CHEBI:30616"/>
        <dbReference type="ChEBI" id="CHEBI:43474"/>
        <dbReference type="ChEBI" id="CHEBI:49552"/>
        <dbReference type="ChEBI" id="CHEBI:456216"/>
        <dbReference type="EC" id="7.2.2.8"/>
    </reaction>
</comment>
<comment type="subcellular location">
    <subcellularLocation>
        <location evidence="1">Cell membrane</location>
        <topology evidence="1">Multi-pass membrane protein</topology>
    </subcellularLocation>
</comment>
<comment type="similarity">
    <text evidence="4">Belongs to the cation transport ATPase (P-type) (TC 3.A.3) family. Type IB subfamily.</text>
</comment>
<feature type="chain" id="PRO_0000350585" description="Copper-exporting P-type ATPase">
    <location>
        <begin position="1"/>
        <end position="802"/>
    </location>
</feature>
<feature type="transmembrane region" description="Helical" evidence="2">
    <location>
        <begin position="161"/>
        <end position="181"/>
    </location>
</feature>
<feature type="transmembrane region" description="Helical" evidence="2">
    <location>
        <begin position="192"/>
        <end position="212"/>
    </location>
</feature>
<feature type="transmembrane region" description="Helical" evidence="2">
    <location>
        <begin position="224"/>
        <end position="244"/>
    </location>
</feature>
<feature type="transmembrane region" description="Helical" evidence="2">
    <location>
        <begin position="256"/>
        <end position="276"/>
    </location>
</feature>
<feature type="transmembrane region" description="Helical" evidence="2">
    <location>
        <begin position="411"/>
        <end position="431"/>
    </location>
</feature>
<feature type="transmembrane region" description="Helical" evidence="2">
    <location>
        <begin position="438"/>
        <end position="458"/>
    </location>
</feature>
<feature type="transmembrane region" description="Helical" evidence="2">
    <location>
        <begin position="748"/>
        <end position="767"/>
    </location>
</feature>
<feature type="transmembrane region" description="Helical" evidence="2">
    <location>
        <begin position="771"/>
        <end position="790"/>
    </location>
</feature>
<feature type="domain" description="HMA 1" evidence="3">
    <location>
        <begin position="5"/>
        <end position="70"/>
    </location>
</feature>
<feature type="domain" description="HMA 2" evidence="3">
    <location>
        <begin position="72"/>
        <end position="138"/>
    </location>
</feature>
<feature type="active site" description="4-aspartylphosphate intermediate" evidence="1">
    <location>
        <position position="495"/>
    </location>
</feature>
<feature type="binding site" evidence="3">
    <location>
        <position position="16"/>
    </location>
    <ligand>
        <name>Cu(+)</name>
        <dbReference type="ChEBI" id="CHEBI:49552"/>
        <label>1</label>
    </ligand>
</feature>
<feature type="binding site" evidence="3">
    <location>
        <position position="19"/>
    </location>
    <ligand>
        <name>Cu(+)</name>
        <dbReference type="ChEBI" id="CHEBI:49552"/>
        <label>1</label>
    </ligand>
</feature>
<feature type="binding site" evidence="3">
    <location>
        <position position="83"/>
    </location>
    <ligand>
        <name>Cu(+)</name>
        <dbReference type="ChEBI" id="CHEBI:49552"/>
        <label>2</label>
    </ligand>
</feature>
<feature type="binding site" evidence="3">
    <location>
        <position position="86"/>
    </location>
    <ligand>
        <name>Cu(+)</name>
        <dbReference type="ChEBI" id="CHEBI:49552"/>
        <label>2</label>
    </ligand>
</feature>
<feature type="binding site">
    <location>
        <position position="690"/>
    </location>
    <ligand>
        <name>Mg(2+)</name>
        <dbReference type="ChEBI" id="CHEBI:18420"/>
    </ligand>
</feature>
<feature type="binding site">
    <location>
        <position position="694"/>
    </location>
    <ligand>
        <name>Mg(2+)</name>
        <dbReference type="ChEBI" id="CHEBI:18420"/>
    </ligand>
</feature>
<name>COPA_STAA2</name>
<organism>
    <name type="scientific">Staphylococcus aureus (strain JH1)</name>
    <dbReference type="NCBI Taxonomy" id="359787"/>
    <lineage>
        <taxon>Bacteria</taxon>
        <taxon>Bacillati</taxon>
        <taxon>Bacillota</taxon>
        <taxon>Bacilli</taxon>
        <taxon>Bacillales</taxon>
        <taxon>Staphylococcaceae</taxon>
        <taxon>Staphylococcus</taxon>
    </lineage>
</organism>
<protein>
    <recommendedName>
        <fullName>Copper-exporting P-type ATPase</fullName>
        <ecNumber>7.2.2.8</ecNumber>
    </recommendedName>
    <alternativeName>
        <fullName>Copper-exporting P-type ATPase A</fullName>
    </alternativeName>
    <alternativeName>
        <fullName>Cu(+)-exporting ATPase</fullName>
    </alternativeName>
</protein>
<gene>
    <name type="primary">copA</name>
    <name type="ordered locus">SaurJH1_2633</name>
</gene>
<proteinExistence type="inferred from homology"/>
<sequence>MANTKKTTLDITGMTCAACSNRIEKKLNKLDDVNAQVNLTTEKATVEYNPDQHDVQEFINTIQHLGYGVTVETVELDITGMTCAACSSRIEKVLNKMNGVQNATVNLTTEQAKVDYYPEETDADKLVTRIQKLGYDASIKDNNKDQTSRKAEALQHKLIKLIISAVLSLPLLMLMFVHLFNMHIPALFTNPWFQFILATPVQFIIGWQFYVGAYKNLRNGGANMDVLVAVGTSAAYFYSIYEMVRWLNGSTTQPHLYFETSAVLLTLILFGKYLEARAKSQTTNALGELLSLQAKEARILKDGNEVMIPLNEVHVGDTLIVKPGEKIPVDGKIIKGMTAIDESMLTGESIPVEKNVDDTVIGSTMNKNGTITMTATKVGGDTALANIIKVVEEAQSSKAPIQRLADIISGYFVPIVVGIALLIFIVWITLVTPGTFEPALVASISVLVIACPCALGLATPTSIMVGTGRAAENGILFKGGEFVERTHQIDTIVLDKTGTITNGRPVVTDYHGDNQTLQLLATAEKDSEHPLAEAIVNYAKEKQLTLTETTTFKAVPGHGIEATIDHHHILVGNRKLMADNDISLPKHISDDLTHYERDGKTAMLIAVNYSLTGIIAVADTVKDHAKDAIKQLHDMGIEVAMLTGDNKNTAQAIAKQVGIDTVIADILPEEKAAQIAKLQQQGKKVAMVGDGVNDAPALVKADIGIAIGTGTEVAIEAADITILGGDLMLIPKAIYASKATIRNIRQNLFWAFGYNIAGIPIAALGLLAPWVAGAAMALSSVSVVTNALRLKKMRLEPRRKDA</sequence>
<evidence type="ECO:0000250" key="1"/>
<evidence type="ECO:0000255" key="2"/>
<evidence type="ECO:0000255" key="3">
    <source>
        <dbReference type="PROSITE-ProRule" id="PRU00280"/>
    </source>
</evidence>
<evidence type="ECO:0000305" key="4"/>